<keyword id="KW-1015">Disulfide bond</keyword>
<keyword id="KW-0528">Neurotoxin</keyword>
<keyword id="KW-0964">Secreted</keyword>
<keyword id="KW-0732">Signal</keyword>
<keyword id="KW-0800">Toxin</keyword>
<sequence length="87" mass="9646">MKLTCVLVVLLLFLPYGDLITNNYIGGAARKVTPWRRNLKTRDVCDSLVGGNCIHNGCWCDQEAPHGNCCDTDGCTAAWWCPGTKWD</sequence>
<comment type="subcellular location">
    <subcellularLocation>
        <location evidence="1">Secreted</location>
    </subcellularLocation>
</comment>
<comment type="tissue specificity">
    <text>Expressed by the venom duct.</text>
</comment>
<comment type="domain">
    <text>The cysteine framework is XII (C-C-C-C-CC-C-C).</text>
</comment>
<comment type="PTM">
    <text evidence="3">Contains 4 disulfide bonds.</text>
</comment>
<comment type="similarity">
    <text evidence="3">Belongs to the conotoxin O1 superfamily.</text>
</comment>
<dbReference type="EMBL" id="FJ959125">
    <property type="protein sequence ID" value="ADB93095.1"/>
    <property type="molecule type" value="Genomic_DNA"/>
</dbReference>
<dbReference type="ConoServer" id="4011">
    <property type="toxin name" value="Cal12.3 precursor"/>
</dbReference>
<dbReference type="GO" id="GO:0005576">
    <property type="term" value="C:extracellular region"/>
    <property type="evidence" value="ECO:0007669"/>
    <property type="project" value="UniProtKB-SubCell"/>
</dbReference>
<dbReference type="GO" id="GO:0008200">
    <property type="term" value="F:ion channel inhibitor activity"/>
    <property type="evidence" value="ECO:0007669"/>
    <property type="project" value="InterPro"/>
</dbReference>
<dbReference type="GO" id="GO:0090729">
    <property type="term" value="F:toxin activity"/>
    <property type="evidence" value="ECO:0007669"/>
    <property type="project" value="UniProtKB-KW"/>
</dbReference>
<dbReference type="InterPro" id="IPR004214">
    <property type="entry name" value="Conotoxin"/>
</dbReference>
<dbReference type="Pfam" id="PF02950">
    <property type="entry name" value="Conotoxin"/>
    <property type="match status" value="1"/>
</dbReference>
<accession>D6C4I3</accession>
<organism>
    <name type="scientific">Californiconus californicus</name>
    <name type="common">California cone</name>
    <name type="synonym">Conus californicus</name>
    <dbReference type="NCBI Taxonomy" id="1736779"/>
    <lineage>
        <taxon>Eukaryota</taxon>
        <taxon>Metazoa</taxon>
        <taxon>Spiralia</taxon>
        <taxon>Lophotrochozoa</taxon>
        <taxon>Mollusca</taxon>
        <taxon>Gastropoda</taxon>
        <taxon>Caenogastropoda</taxon>
        <taxon>Neogastropoda</taxon>
        <taxon>Conoidea</taxon>
        <taxon>Conidae</taxon>
        <taxon>Californiconus</taxon>
    </lineage>
</organism>
<evidence type="ECO:0000250" key="1"/>
<evidence type="ECO:0000255" key="2"/>
<evidence type="ECO:0000305" key="3"/>
<protein>
    <recommendedName>
        <fullName>Conotoxin Cl12.3</fullName>
    </recommendedName>
</protein>
<proteinExistence type="inferred from homology"/>
<name>CO1C3_CONCL</name>
<reference key="1">
    <citation type="journal article" date="2010" name="Mol. Phylogenet. Evol.">
        <title>Evolution of Conus peptide toxins: analysis of Conus californicus Reeve, 1844.</title>
        <authorList>
            <person name="Biggs J.S."/>
            <person name="Watkins M."/>
            <person name="Puillandre N."/>
            <person name="Ownby J.P."/>
            <person name="Lopez-Vera E."/>
            <person name="Christensen S."/>
            <person name="Moreno K.J."/>
            <person name="Bernaldez J."/>
            <person name="Licea-Navarro A."/>
            <person name="Corneli P.S."/>
            <person name="Olivera B.M."/>
        </authorList>
    </citation>
    <scope>NUCLEOTIDE SEQUENCE [GENOMIC DNA]</scope>
</reference>
<feature type="signal peptide" evidence="2">
    <location>
        <begin position="1"/>
        <end position="19"/>
    </location>
</feature>
<feature type="propeptide" id="PRO_0000414993" evidence="1">
    <location>
        <begin position="20"/>
        <end position="42"/>
    </location>
</feature>
<feature type="peptide" id="PRO_0000414994" description="Conotoxin Cl12.3">
    <location>
        <begin position="43"/>
        <end position="87"/>
    </location>
</feature>